<feature type="chain" id="PRO_0000321833" description="Transmembrane protein 223">
    <location>
        <begin position="1"/>
        <end position="202"/>
    </location>
</feature>
<feature type="topological domain" description="Mitochondrial matrix" evidence="6">
    <location>
        <begin position="1"/>
        <end position="43"/>
    </location>
</feature>
<feature type="transmembrane region" description="Helical" evidence="1">
    <location>
        <begin position="44"/>
        <end position="64"/>
    </location>
</feature>
<feature type="topological domain" description="Mitochondrial intermembrane" evidence="6">
    <location>
        <begin position="65"/>
        <end position="97"/>
    </location>
</feature>
<feature type="transmembrane region" description="Helical" evidence="1">
    <location>
        <begin position="98"/>
        <end position="118"/>
    </location>
</feature>
<feature type="topological domain" description="Mitochondrial matrix" evidence="6">
    <location>
        <begin position="119"/>
        <end position="202"/>
    </location>
</feature>
<feature type="sequence variant" id="VAR_039357" description="In dbSNP:rs2584918." evidence="2">
    <original>T</original>
    <variation>A</variation>
    <location>
        <position position="28"/>
    </location>
</feature>
<feature type="sequence variant" id="VAR_039358" description="In dbSNP:rs11827177.">
    <original>V</original>
    <variation>G</variation>
    <location>
        <position position="196"/>
    </location>
</feature>
<feature type="sequence conflict" description="In Ref. 2; AAH42801." evidence="5" ref="2">
    <original>R</original>
    <variation>S</variation>
    <location>
        <position position="175"/>
    </location>
</feature>
<keyword id="KW-0472">Membrane</keyword>
<keyword id="KW-0496">Mitochondrion</keyword>
<keyword id="KW-0999">Mitochondrion inner membrane</keyword>
<keyword id="KW-1267">Proteomics identification</keyword>
<keyword id="KW-1185">Reference proteome</keyword>
<keyword id="KW-0812">Transmembrane</keyword>
<keyword id="KW-1133">Transmembrane helix</keyword>
<proteinExistence type="evidence at protein level"/>
<gene>
    <name evidence="4 7" type="primary">TMEM223</name>
</gene>
<protein>
    <recommendedName>
        <fullName evidence="5">Transmembrane protein 223</fullName>
    </recommendedName>
</protein>
<name>TM223_HUMAN</name>
<comment type="function">
    <text evidence="3">Mitochondrial ribosome-associated protein involved in the first steps of cytochrome c oxidase complex (complex IV) biogenesis (PubMed:34969438). Stimulates the translation of MT-CO1 mRNA and is a constituent of early MT-CO1 assembly intermediates (PubMed:34969438).</text>
</comment>
<comment type="subunit">
    <text evidence="3">Associates with the mitochondrial ribosome.</text>
</comment>
<comment type="subcellular location">
    <subcellularLocation>
        <location evidence="3">Mitochondrion inner membrane</location>
        <topology evidence="1">Multi-pass membrane protein</topology>
    </subcellularLocation>
</comment>
<comment type="similarity">
    <text evidence="5">Belongs to the TMEM223 family.</text>
</comment>
<comment type="sequence caution" evidence="5">
    <conflict type="erroneous initiation">
        <sequence resource="EMBL-CDS" id="AAH20914"/>
    </conflict>
</comment>
<evidence type="ECO:0000255" key="1"/>
<evidence type="ECO:0000269" key="2">
    <source>
    </source>
</evidence>
<evidence type="ECO:0000269" key="3">
    <source>
    </source>
</evidence>
<evidence type="ECO:0000303" key="4">
    <source>
    </source>
</evidence>
<evidence type="ECO:0000305" key="5"/>
<evidence type="ECO:0000305" key="6">
    <source>
    </source>
</evidence>
<evidence type="ECO:0000312" key="7">
    <source>
        <dbReference type="HGNC" id="HGNC:28464"/>
    </source>
</evidence>
<accession>A0PJW6</accession>
<accession>Q504S0</accession>
<accession>Q86YD4</accession>
<accession>Q8WUC5</accession>
<accession>Q96HG0</accession>
<sequence length="202" mass="22049">MAAPWRRWPTGLLAVLRPLLTCRPLQGTTLQRDVLLFEHDRGRFFTILGLFCAGQGVFWASMAVAAVSRPPVPVQPLDAEVPNRGPFDLRSALWRYGLAVGCGAIGALVLGAGLLFSLRSVRSVVLRAGGQQVTLTTHAPFGLGAHFTVPLKQVSCMAHRGEVPAMLPLKVKGRRFYFLLDKTGHFPNTKLFDNTVGAYRSL</sequence>
<reference key="1">
    <citation type="submission" date="2005-07" db="EMBL/GenBank/DDBJ databases">
        <authorList>
            <person name="Mural R.J."/>
            <person name="Istrail S."/>
            <person name="Sutton G.G."/>
            <person name="Florea L."/>
            <person name="Halpern A.L."/>
            <person name="Mobarry C.M."/>
            <person name="Lippert R."/>
            <person name="Walenz B."/>
            <person name="Shatkay H."/>
            <person name="Dew I."/>
            <person name="Miller J.R."/>
            <person name="Flanigan M.J."/>
            <person name="Edwards N.J."/>
            <person name="Bolanos R."/>
            <person name="Fasulo D."/>
            <person name="Halldorsson B.V."/>
            <person name="Hannenhalli S."/>
            <person name="Turner R."/>
            <person name="Yooseph S."/>
            <person name="Lu F."/>
            <person name="Nusskern D.R."/>
            <person name="Shue B.C."/>
            <person name="Zheng X.H."/>
            <person name="Zhong F."/>
            <person name="Delcher A.L."/>
            <person name="Huson D.H."/>
            <person name="Kravitz S.A."/>
            <person name="Mouchard L."/>
            <person name="Reinert K."/>
            <person name="Remington K.A."/>
            <person name="Clark A.G."/>
            <person name="Waterman M.S."/>
            <person name="Eichler E.E."/>
            <person name="Adams M.D."/>
            <person name="Hunkapiller M.W."/>
            <person name="Myers E.W."/>
            <person name="Venter J.C."/>
        </authorList>
    </citation>
    <scope>NUCLEOTIDE SEQUENCE [LARGE SCALE GENOMIC DNA]</scope>
</reference>
<reference key="2">
    <citation type="journal article" date="2004" name="Genome Res.">
        <title>The status, quality, and expansion of the NIH full-length cDNA project: the Mammalian Gene Collection (MGC).</title>
        <authorList>
            <consortium name="The MGC Project Team"/>
        </authorList>
    </citation>
    <scope>NUCLEOTIDE SEQUENCE [LARGE SCALE MRNA]</scope>
    <scope>VARIANT ALA-28</scope>
    <source>
        <tissue>Colon</tissue>
        <tissue>Hippocampus</tissue>
        <tissue>Lung</tissue>
    </source>
</reference>
<reference key="3">
    <citation type="journal article" date="2011" name="BMC Syst. Biol.">
        <title>Initial characterization of the human central proteome.</title>
        <authorList>
            <person name="Burkard T.R."/>
            <person name="Planyavsky M."/>
            <person name="Kaupe I."/>
            <person name="Breitwieser F.P."/>
            <person name="Buerckstuemmer T."/>
            <person name="Bennett K.L."/>
            <person name="Superti-Furga G."/>
            <person name="Colinge J."/>
        </authorList>
    </citation>
    <scope>IDENTIFICATION BY MASS SPECTROMETRY [LARGE SCALE ANALYSIS]</scope>
</reference>
<reference key="4">
    <citation type="journal article" date="2021" name="Elife">
        <title>Defining the interactome of the human mitochondrial ribosome identifies SMIM4 and TMEM223 as respiratory chain assembly factors.</title>
        <authorList>
            <person name="Dennerlein S."/>
            <person name="Poerschke S."/>
            <person name="Oeljeklaus S."/>
            <person name="Wang C."/>
            <person name="Richter-Dennerlein R."/>
            <person name="Sattmann J."/>
            <person name="Bauermeister D."/>
            <person name="Hanitsch E."/>
            <person name="Stoldt S."/>
            <person name="Langer T."/>
            <person name="Jakobs S."/>
            <person name="Warscheid B."/>
            <person name="Rehling P."/>
        </authorList>
    </citation>
    <scope>FUNCTION</scope>
    <scope>SUBCELLULAR LOCATION</scope>
    <scope>TOPOLOGY</scope>
    <scope>INTERACTION WITH MITOCHONDRIAL RIBOSOME</scope>
</reference>
<organism>
    <name type="scientific">Homo sapiens</name>
    <name type="common">Human</name>
    <dbReference type="NCBI Taxonomy" id="9606"/>
    <lineage>
        <taxon>Eukaryota</taxon>
        <taxon>Metazoa</taxon>
        <taxon>Chordata</taxon>
        <taxon>Craniata</taxon>
        <taxon>Vertebrata</taxon>
        <taxon>Euteleostomi</taxon>
        <taxon>Mammalia</taxon>
        <taxon>Eutheria</taxon>
        <taxon>Euarchontoglires</taxon>
        <taxon>Primates</taxon>
        <taxon>Haplorrhini</taxon>
        <taxon>Catarrhini</taxon>
        <taxon>Hominidae</taxon>
        <taxon>Homo</taxon>
    </lineage>
</organism>
<dbReference type="EMBL" id="CH471076">
    <property type="protein sequence ID" value="EAW74102.1"/>
    <property type="molecule type" value="Genomic_DNA"/>
</dbReference>
<dbReference type="EMBL" id="BC008643">
    <property type="protein sequence ID" value="AAH08643.1"/>
    <property type="molecule type" value="mRNA"/>
</dbReference>
<dbReference type="EMBL" id="BC020914">
    <property type="protein sequence ID" value="AAH20914.1"/>
    <property type="status" value="ALT_INIT"/>
    <property type="molecule type" value="mRNA"/>
</dbReference>
<dbReference type="EMBL" id="BC042801">
    <property type="protein sequence ID" value="AAH42801.1"/>
    <property type="molecule type" value="mRNA"/>
</dbReference>
<dbReference type="EMBL" id="BC094837">
    <property type="protein sequence ID" value="AAH94837.1"/>
    <property type="molecule type" value="mRNA"/>
</dbReference>
<dbReference type="EMBL" id="BC127679">
    <property type="protein sequence ID" value="AAI27680.1"/>
    <property type="molecule type" value="mRNA"/>
</dbReference>
<dbReference type="CCDS" id="CCDS44628.1"/>
<dbReference type="RefSeq" id="NP_001073970.1">
    <property type="nucleotide sequence ID" value="NM_001080501.3"/>
</dbReference>
<dbReference type="BioGRID" id="122517">
    <property type="interactions" value="63"/>
</dbReference>
<dbReference type="FunCoup" id="A0PJW6">
    <property type="interactions" value="1102"/>
</dbReference>
<dbReference type="IntAct" id="A0PJW6">
    <property type="interactions" value="57"/>
</dbReference>
<dbReference type="STRING" id="9606.ENSP00000303987"/>
<dbReference type="TCDB" id="8.A.115.1.1">
    <property type="family name" value="the transmembrane protein 223 (tmem223) family"/>
</dbReference>
<dbReference type="iPTMnet" id="A0PJW6"/>
<dbReference type="PhosphoSitePlus" id="A0PJW6"/>
<dbReference type="SwissPalm" id="A0PJW6"/>
<dbReference type="BioMuta" id="TMEM223"/>
<dbReference type="jPOST" id="A0PJW6"/>
<dbReference type="MassIVE" id="A0PJW6"/>
<dbReference type="PaxDb" id="9606-ENSP00000303987"/>
<dbReference type="PeptideAtlas" id="A0PJW6"/>
<dbReference type="ProteomicsDB" id="64"/>
<dbReference type="Pumba" id="A0PJW6"/>
<dbReference type="Antibodypedia" id="3050">
    <property type="antibodies" value="8 antibodies from 7 providers"/>
</dbReference>
<dbReference type="DNASU" id="79064"/>
<dbReference type="Ensembl" id="ENST00000307366.8">
    <property type="protein sequence ID" value="ENSP00000303987.7"/>
    <property type="gene ID" value="ENSG00000168569.8"/>
</dbReference>
<dbReference type="GeneID" id="79064"/>
<dbReference type="KEGG" id="hsa:79064"/>
<dbReference type="MANE-Select" id="ENST00000307366.8">
    <property type="protein sequence ID" value="ENSP00000303987.7"/>
    <property type="RefSeq nucleotide sequence ID" value="NM_001080501.3"/>
    <property type="RefSeq protein sequence ID" value="NP_001073970.1"/>
</dbReference>
<dbReference type="UCSC" id="uc001nve.3">
    <property type="organism name" value="human"/>
</dbReference>
<dbReference type="AGR" id="HGNC:28464"/>
<dbReference type="CTD" id="79064"/>
<dbReference type="DisGeNET" id="79064"/>
<dbReference type="GeneCards" id="TMEM223"/>
<dbReference type="HGNC" id="HGNC:28464">
    <property type="gene designation" value="TMEM223"/>
</dbReference>
<dbReference type="HPA" id="ENSG00000168569">
    <property type="expression patterns" value="Low tissue specificity"/>
</dbReference>
<dbReference type="MIM" id="620434">
    <property type="type" value="gene"/>
</dbReference>
<dbReference type="neXtProt" id="NX_A0PJW6"/>
<dbReference type="OpenTargets" id="ENSG00000168569"/>
<dbReference type="PharmGKB" id="PA164726538"/>
<dbReference type="VEuPathDB" id="HostDB:ENSG00000168569"/>
<dbReference type="eggNOG" id="ENOG502S0RN">
    <property type="taxonomic scope" value="Eukaryota"/>
</dbReference>
<dbReference type="GeneTree" id="ENSGT00390000012589"/>
<dbReference type="HOGENOM" id="CLU_099187_0_0_1"/>
<dbReference type="InParanoid" id="A0PJW6"/>
<dbReference type="OMA" id="KQVSCMA"/>
<dbReference type="OrthoDB" id="5950063at2759"/>
<dbReference type="PAN-GO" id="A0PJW6">
    <property type="GO annotations" value="2 GO annotations based on evolutionary models"/>
</dbReference>
<dbReference type="PhylomeDB" id="A0PJW6"/>
<dbReference type="TreeFam" id="TF324862"/>
<dbReference type="PathwayCommons" id="A0PJW6"/>
<dbReference type="Reactome" id="R-HSA-9864848">
    <property type="pathway name" value="Complex IV assembly"/>
</dbReference>
<dbReference type="SignaLink" id="A0PJW6"/>
<dbReference type="BioGRID-ORCS" id="79064">
    <property type="hits" value="15 hits in 1162 CRISPR screens"/>
</dbReference>
<dbReference type="ChiTaRS" id="TMEM223">
    <property type="organism name" value="human"/>
</dbReference>
<dbReference type="GenomeRNAi" id="79064"/>
<dbReference type="Pharos" id="A0PJW6">
    <property type="development level" value="Tdark"/>
</dbReference>
<dbReference type="PRO" id="PR:A0PJW6"/>
<dbReference type="Proteomes" id="UP000005640">
    <property type="component" value="Chromosome 11"/>
</dbReference>
<dbReference type="RNAct" id="A0PJW6">
    <property type="molecule type" value="protein"/>
</dbReference>
<dbReference type="Bgee" id="ENSG00000168569">
    <property type="expression patterns" value="Expressed in mucosa of transverse colon and 95 other cell types or tissues"/>
</dbReference>
<dbReference type="ExpressionAtlas" id="A0PJW6">
    <property type="expression patterns" value="baseline and differential"/>
</dbReference>
<dbReference type="GO" id="GO:0005743">
    <property type="term" value="C:mitochondrial inner membrane"/>
    <property type="evidence" value="ECO:0000314"/>
    <property type="project" value="UniProtKB"/>
</dbReference>
<dbReference type="GO" id="GO:0005739">
    <property type="term" value="C:mitochondrion"/>
    <property type="evidence" value="ECO:0000314"/>
    <property type="project" value="UniProtKB"/>
</dbReference>
<dbReference type="GO" id="GO:0097177">
    <property type="term" value="F:mitochondrial ribosome binding"/>
    <property type="evidence" value="ECO:0000314"/>
    <property type="project" value="UniProtKB"/>
</dbReference>
<dbReference type="GO" id="GO:0033617">
    <property type="term" value="P:mitochondrial cytochrome c oxidase assembly"/>
    <property type="evidence" value="ECO:0000314"/>
    <property type="project" value="UniProtKB"/>
</dbReference>
<dbReference type="InterPro" id="IPR026100">
    <property type="entry name" value="Tmem223"/>
</dbReference>
<dbReference type="InterPro" id="IPR045325">
    <property type="entry name" value="TMEM70/TMEM186/TMEM223"/>
</dbReference>
<dbReference type="PANTHER" id="PTHR14549">
    <property type="entry name" value="TRANSMEMBRANE PROTEIN 223"/>
    <property type="match status" value="1"/>
</dbReference>
<dbReference type="PANTHER" id="PTHR14549:SF2">
    <property type="entry name" value="TRANSMEMBRANE PROTEIN 223"/>
    <property type="match status" value="1"/>
</dbReference>
<dbReference type="Pfam" id="PF06979">
    <property type="entry name" value="TMEM70"/>
    <property type="match status" value="1"/>
</dbReference>